<name>SBT32_ARATH</name>
<dbReference type="EC" id="3.4.21.-" evidence="6"/>
<dbReference type="EMBL" id="AC006424">
    <property type="protein sequence ID" value="AAF31279.1"/>
    <property type="molecule type" value="Genomic_DNA"/>
</dbReference>
<dbReference type="EMBL" id="CP002684">
    <property type="protein sequence ID" value="AEE31545.1"/>
    <property type="molecule type" value="Genomic_DNA"/>
</dbReference>
<dbReference type="EMBL" id="AK175327">
    <property type="protein sequence ID" value="BAD43090.1"/>
    <property type="molecule type" value="mRNA"/>
</dbReference>
<dbReference type="PIR" id="D86454">
    <property type="entry name" value="D86454"/>
</dbReference>
<dbReference type="RefSeq" id="NP_174573.1">
    <molecule id="Q9MAP4-1"/>
    <property type="nucleotide sequence ID" value="NM_103030.2"/>
</dbReference>
<dbReference type="SMR" id="Q9MAP4"/>
<dbReference type="FunCoup" id="Q9MAP4">
    <property type="interactions" value="4"/>
</dbReference>
<dbReference type="MEROPS" id="S08.A41"/>
<dbReference type="GlyCosmos" id="Q9MAP4">
    <property type="glycosylation" value="6 sites, No reported glycans"/>
</dbReference>
<dbReference type="GlyGen" id="Q9MAP4">
    <property type="glycosylation" value="7 sites"/>
</dbReference>
<dbReference type="iPTMnet" id="Q9MAP4"/>
<dbReference type="PaxDb" id="3702-AT1G32970.1"/>
<dbReference type="EnsemblPlants" id="AT1G32970.1">
    <molecule id="Q9MAP4-1"/>
    <property type="protein sequence ID" value="AT1G32970.1"/>
    <property type="gene ID" value="AT1G32970"/>
</dbReference>
<dbReference type="GeneID" id="840191"/>
<dbReference type="Gramene" id="AT1G32970.1">
    <molecule id="Q9MAP4-1"/>
    <property type="protein sequence ID" value="AT1G32970.1"/>
    <property type="gene ID" value="AT1G32970"/>
</dbReference>
<dbReference type="KEGG" id="ath:AT1G32970"/>
<dbReference type="Araport" id="AT1G32970"/>
<dbReference type="TAIR" id="AT1G32970"/>
<dbReference type="eggNOG" id="ENOG502QSF0">
    <property type="taxonomic scope" value="Eukaryota"/>
</dbReference>
<dbReference type="HOGENOM" id="CLU_000625_4_2_1"/>
<dbReference type="InParanoid" id="Q9MAP4"/>
<dbReference type="OMA" id="MYKACWH"/>
<dbReference type="PhylomeDB" id="Q9MAP4"/>
<dbReference type="PRO" id="PR:Q9MAP4"/>
<dbReference type="Proteomes" id="UP000006548">
    <property type="component" value="Chromosome 1"/>
</dbReference>
<dbReference type="ExpressionAtlas" id="Q9MAP4">
    <property type="expression patterns" value="baseline and differential"/>
</dbReference>
<dbReference type="GO" id="GO:0005576">
    <property type="term" value="C:extracellular region"/>
    <property type="evidence" value="ECO:0007669"/>
    <property type="project" value="UniProtKB-SubCell"/>
</dbReference>
<dbReference type="GO" id="GO:0004252">
    <property type="term" value="F:serine-type endopeptidase activity"/>
    <property type="evidence" value="ECO:0007669"/>
    <property type="project" value="InterPro"/>
</dbReference>
<dbReference type="GO" id="GO:0006508">
    <property type="term" value="P:proteolysis"/>
    <property type="evidence" value="ECO:0007669"/>
    <property type="project" value="UniProtKB-KW"/>
</dbReference>
<dbReference type="CDD" id="cd02120">
    <property type="entry name" value="PA_subtilisin_like"/>
    <property type="match status" value="1"/>
</dbReference>
<dbReference type="CDD" id="cd04852">
    <property type="entry name" value="Peptidases_S8_3"/>
    <property type="match status" value="1"/>
</dbReference>
<dbReference type="FunFam" id="2.60.40.2310:FF:000001">
    <property type="entry name" value="Subtilisin-like protease SBT1.5"/>
    <property type="match status" value="1"/>
</dbReference>
<dbReference type="FunFam" id="3.50.30.30:FF:000005">
    <property type="entry name" value="subtilisin-like protease SBT1.5"/>
    <property type="match status" value="1"/>
</dbReference>
<dbReference type="Gene3D" id="2.60.40.2310">
    <property type="match status" value="1"/>
</dbReference>
<dbReference type="Gene3D" id="3.50.30.30">
    <property type="match status" value="1"/>
</dbReference>
<dbReference type="Gene3D" id="3.30.70.80">
    <property type="entry name" value="Peptidase S8 propeptide/proteinase inhibitor I9"/>
    <property type="match status" value="1"/>
</dbReference>
<dbReference type="Gene3D" id="3.40.50.200">
    <property type="entry name" value="Peptidase S8/S53 domain"/>
    <property type="match status" value="1"/>
</dbReference>
<dbReference type="InterPro" id="IPR000209">
    <property type="entry name" value="Peptidase_S8/S53_dom"/>
</dbReference>
<dbReference type="InterPro" id="IPR036852">
    <property type="entry name" value="Peptidase_S8/S53_dom_sf"/>
</dbReference>
<dbReference type="InterPro" id="IPR023828">
    <property type="entry name" value="Peptidase_S8_Ser-AS"/>
</dbReference>
<dbReference type="InterPro" id="IPR015500">
    <property type="entry name" value="Peptidase_S8_subtilisin-rel"/>
</dbReference>
<dbReference type="InterPro" id="IPR034197">
    <property type="entry name" value="Peptidases_S8_3"/>
</dbReference>
<dbReference type="InterPro" id="IPR037045">
    <property type="entry name" value="S8pro/Inhibitor_I9_sf"/>
</dbReference>
<dbReference type="InterPro" id="IPR045051">
    <property type="entry name" value="SBT"/>
</dbReference>
<dbReference type="InterPro" id="IPR041469">
    <property type="entry name" value="Subtilisin-like_FN3"/>
</dbReference>
<dbReference type="PANTHER" id="PTHR10795">
    <property type="entry name" value="PROPROTEIN CONVERTASE SUBTILISIN/KEXIN"/>
    <property type="match status" value="1"/>
</dbReference>
<dbReference type="Pfam" id="PF17766">
    <property type="entry name" value="fn3_6"/>
    <property type="match status" value="1"/>
</dbReference>
<dbReference type="Pfam" id="PF00082">
    <property type="entry name" value="Peptidase_S8"/>
    <property type="match status" value="1"/>
</dbReference>
<dbReference type="PRINTS" id="PR00723">
    <property type="entry name" value="SUBTILISIN"/>
</dbReference>
<dbReference type="SUPFAM" id="SSF52743">
    <property type="entry name" value="Subtilisin-like"/>
    <property type="match status" value="1"/>
</dbReference>
<dbReference type="PROSITE" id="PS51892">
    <property type="entry name" value="SUBTILASE"/>
    <property type="match status" value="1"/>
</dbReference>
<dbReference type="PROSITE" id="PS00138">
    <property type="entry name" value="SUBTILASE_SER"/>
    <property type="match status" value="1"/>
</dbReference>
<keyword id="KW-0025">Alternative splicing</keyword>
<keyword id="KW-0068">Autocatalytic cleavage</keyword>
<keyword id="KW-0325">Glycoprotein</keyword>
<keyword id="KW-0378">Hydrolase</keyword>
<keyword id="KW-0645">Protease</keyword>
<keyword id="KW-1185">Reference proteome</keyword>
<keyword id="KW-0964">Secreted</keyword>
<keyword id="KW-0720">Serine protease</keyword>
<keyword id="KW-0732">Signal</keyword>
<keyword id="KW-0865">Zymogen</keyword>
<protein>
    <recommendedName>
        <fullName evidence="7">Subtilisin-like protease SBT3.2</fullName>
        <ecNumber evidence="6">3.4.21.-</ecNumber>
    </recommendedName>
    <alternativeName>
        <fullName evidence="7">Subtilase subfamily 3 member 2</fullName>
        <shortName evidence="7">AtSBT3.2</shortName>
    </alternativeName>
</protein>
<comment type="subcellular location">
    <subcellularLocation>
        <location evidence="2">Secreted</location>
    </subcellularLocation>
</comment>
<comment type="alternative products">
    <event type="alternative splicing"/>
    <isoform>
        <id>Q9MAP4-1</id>
        <name>1</name>
        <sequence type="displayed"/>
    </isoform>
    <isoform>
        <id>Q9MAP4-2</id>
        <name>2</name>
        <sequence type="described" ref="VSP_058025 VSP_058026 VSP_058027"/>
    </isoform>
</comment>
<comment type="similarity">
    <text evidence="8">Belongs to the peptidase S8 family.</text>
</comment>
<accession>Q9MAP4</accession>
<accession>Q682P0</accession>
<gene>
    <name evidence="7" type="primary">SBT3.2</name>
    <name evidence="9" type="ordered locus">At1g32970</name>
    <name evidence="10" type="ORF">F9L11.14</name>
</gene>
<reference key="1">
    <citation type="journal article" date="2000" name="Nature">
        <title>Sequence and analysis of chromosome 1 of the plant Arabidopsis thaliana.</title>
        <authorList>
            <person name="Theologis A."/>
            <person name="Ecker J.R."/>
            <person name="Palm C.J."/>
            <person name="Federspiel N.A."/>
            <person name="Kaul S."/>
            <person name="White O."/>
            <person name="Alonso J."/>
            <person name="Altafi H."/>
            <person name="Araujo R."/>
            <person name="Bowman C.L."/>
            <person name="Brooks S.Y."/>
            <person name="Buehler E."/>
            <person name="Chan A."/>
            <person name="Chao Q."/>
            <person name="Chen H."/>
            <person name="Cheuk R.F."/>
            <person name="Chin C.W."/>
            <person name="Chung M.K."/>
            <person name="Conn L."/>
            <person name="Conway A.B."/>
            <person name="Conway A.R."/>
            <person name="Creasy T.H."/>
            <person name="Dewar K."/>
            <person name="Dunn P."/>
            <person name="Etgu P."/>
            <person name="Feldblyum T.V."/>
            <person name="Feng J.-D."/>
            <person name="Fong B."/>
            <person name="Fujii C.Y."/>
            <person name="Gill J.E."/>
            <person name="Goldsmith A.D."/>
            <person name="Haas B."/>
            <person name="Hansen N.F."/>
            <person name="Hughes B."/>
            <person name="Huizar L."/>
            <person name="Hunter J.L."/>
            <person name="Jenkins J."/>
            <person name="Johnson-Hopson C."/>
            <person name="Khan S."/>
            <person name="Khaykin E."/>
            <person name="Kim C.J."/>
            <person name="Koo H.L."/>
            <person name="Kremenetskaia I."/>
            <person name="Kurtz D.B."/>
            <person name="Kwan A."/>
            <person name="Lam B."/>
            <person name="Langin-Hooper S."/>
            <person name="Lee A."/>
            <person name="Lee J.M."/>
            <person name="Lenz C.A."/>
            <person name="Li J.H."/>
            <person name="Li Y.-P."/>
            <person name="Lin X."/>
            <person name="Liu S.X."/>
            <person name="Liu Z.A."/>
            <person name="Luros J.S."/>
            <person name="Maiti R."/>
            <person name="Marziali A."/>
            <person name="Militscher J."/>
            <person name="Miranda M."/>
            <person name="Nguyen M."/>
            <person name="Nierman W.C."/>
            <person name="Osborne B.I."/>
            <person name="Pai G."/>
            <person name="Peterson J."/>
            <person name="Pham P.K."/>
            <person name="Rizzo M."/>
            <person name="Rooney T."/>
            <person name="Rowley D."/>
            <person name="Sakano H."/>
            <person name="Salzberg S.L."/>
            <person name="Schwartz J.R."/>
            <person name="Shinn P."/>
            <person name="Southwick A.M."/>
            <person name="Sun H."/>
            <person name="Tallon L.J."/>
            <person name="Tambunga G."/>
            <person name="Toriumi M.J."/>
            <person name="Town C.D."/>
            <person name="Utterback T."/>
            <person name="Van Aken S."/>
            <person name="Vaysberg M."/>
            <person name="Vysotskaia V.S."/>
            <person name="Walker M."/>
            <person name="Wu D."/>
            <person name="Yu G."/>
            <person name="Fraser C.M."/>
            <person name="Venter J.C."/>
            <person name="Davis R.W."/>
        </authorList>
    </citation>
    <scope>NUCLEOTIDE SEQUENCE [LARGE SCALE GENOMIC DNA]</scope>
    <source>
        <strain>cv. Columbia</strain>
    </source>
</reference>
<reference key="2">
    <citation type="journal article" date="2017" name="Plant J.">
        <title>Araport11: a complete reannotation of the Arabidopsis thaliana reference genome.</title>
        <authorList>
            <person name="Cheng C.Y."/>
            <person name="Krishnakumar V."/>
            <person name="Chan A.P."/>
            <person name="Thibaud-Nissen F."/>
            <person name="Schobel S."/>
            <person name="Town C.D."/>
        </authorList>
    </citation>
    <scope>GENOME REANNOTATION</scope>
    <source>
        <strain>cv. Columbia</strain>
    </source>
</reference>
<reference key="3">
    <citation type="submission" date="2004-09" db="EMBL/GenBank/DDBJ databases">
        <title>Large-scale analysis of RIKEN Arabidopsis full-length (RAFL) cDNAs.</title>
        <authorList>
            <person name="Totoki Y."/>
            <person name="Seki M."/>
            <person name="Ishida J."/>
            <person name="Nakajima M."/>
            <person name="Enju A."/>
            <person name="Kamiya A."/>
            <person name="Narusaka M."/>
            <person name="Shin-i T."/>
            <person name="Nakagawa M."/>
            <person name="Sakamoto N."/>
            <person name="Oishi K."/>
            <person name="Kohara Y."/>
            <person name="Kobayashi M."/>
            <person name="Toyoda A."/>
            <person name="Sakaki Y."/>
            <person name="Sakurai T."/>
            <person name="Iida K."/>
            <person name="Akiyama K."/>
            <person name="Satou M."/>
            <person name="Toyoda T."/>
            <person name="Konagaya A."/>
            <person name="Carninci P."/>
            <person name="Kawai J."/>
            <person name="Hayashizaki Y."/>
            <person name="Shinozaki K."/>
        </authorList>
    </citation>
    <scope>NUCLEOTIDE SEQUENCE [LARGE SCALE MRNA] (ISOFORM 2)</scope>
    <source>
        <strain>cv. Columbia</strain>
    </source>
</reference>
<reference key="4">
    <citation type="journal article" date="2005" name="PLoS Comput. Biol.">
        <title>Inferring hypotheses on functional relationships of genes: Analysis of the Arabidopsis thaliana subtilase gene family.</title>
        <authorList>
            <person name="Rautengarten C."/>
            <person name="Steinhauser D."/>
            <person name="Bussis D."/>
            <person name="Stintzi A."/>
            <person name="Schaller A."/>
            <person name="Kopka J."/>
            <person name="Altmann T."/>
        </authorList>
    </citation>
    <scope>GENE FAMILY</scope>
    <scope>NOMENCLATURE</scope>
</reference>
<sequence length="734" mass="79164">MTRALILVAICLMLTLNNAAETKVHIVYLGEKQHDDPDSVTESHHQMLWSILGSKEAAHDSMTPWLLSFRSQTNQFPSESTLRFYELQTTRTWDYLQHTSKHPKNILNQTNMGDQLIIGVVDSVTLNWFGFILLKQEYGQSLNHSVTMVLDQYQNVGKEVQLGHAENPEYISPRDFDGHGTHVAATAAGSFVPDTNYLGLGRGTARGGAPRARIAMYKACWHLVTGATTCSAADLVKAIDEAIHDGVDVLSISNGFSVPLFPEVDTQDGVAVGAFHAVAKGIPVVCAGGNAGPSSQTISNTAPWIITVAATTQDRSFPTFITLGNNVTVVGQALYQGPDIDFTELVYPEDSGASNETFYGVCEDLAKNPAHIIEEKIVLCFTKSTSYSTMIQAASDVVKLDGYGVIVARNPGHQLSPCFGFPCLAVDYELGTDILFYIRSTRSPVAKIQPTRTLVGLPVATKVATFSSRGPNSISPAILKPDIAAPGVNILAATSPNDTFYDKGFAMKSGTSMSAPVVAGIVALLKSVHPHWSPAAIRSAIVTTAWRTDPSGEPIFADGSNRKLADPFDYGGGVVNSEKAANPGLVYDMGVKDYILYLCSVGYTDSSITGLVSKKTVCANPKPSVLDLNLPSITIPNLAKEVTITRTVTNVGPVGSVYKPVIEAPMGVNVTVTPSTLVFNAYTRKLSFKVRVLTNHIVNTGYYFGSLTWTDSVHNVVIPVSVRTQIMQRYYDEN</sequence>
<organism>
    <name type="scientific">Arabidopsis thaliana</name>
    <name type="common">Mouse-ear cress</name>
    <dbReference type="NCBI Taxonomy" id="3702"/>
    <lineage>
        <taxon>Eukaryota</taxon>
        <taxon>Viridiplantae</taxon>
        <taxon>Streptophyta</taxon>
        <taxon>Embryophyta</taxon>
        <taxon>Tracheophyta</taxon>
        <taxon>Spermatophyta</taxon>
        <taxon>Magnoliopsida</taxon>
        <taxon>eudicotyledons</taxon>
        <taxon>Gunneridae</taxon>
        <taxon>Pentapetalae</taxon>
        <taxon>rosids</taxon>
        <taxon>malvids</taxon>
        <taxon>Brassicales</taxon>
        <taxon>Brassicaceae</taxon>
        <taxon>Camelineae</taxon>
        <taxon>Arabidopsis</taxon>
    </lineage>
</organism>
<proteinExistence type="evidence at transcript level"/>
<evidence type="ECO:0000250" key="1">
    <source>
        <dbReference type="UniProtKB" id="Q39547"/>
    </source>
</evidence>
<evidence type="ECO:0000250" key="2">
    <source>
        <dbReference type="UniProtKB" id="Q84WS0"/>
    </source>
</evidence>
<evidence type="ECO:0000255" key="3"/>
<evidence type="ECO:0000255" key="4">
    <source>
        <dbReference type="PROSITE-ProRule" id="PRU00498"/>
    </source>
</evidence>
<evidence type="ECO:0000255" key="5">
    <source>
        <dbReference type="PROSITE-ProRule" id="PRU01240"/>
    </source>
</evidence>
<evidence type="ECO:0000255" key="6">
    <source>
        <dbReference type="PROSITE-ProRule" id="PRU10082"/>
    </source>
</evidence>
<evidence type="ECO:0000303" key="7">
    <source>
    </source>
</evidence>
<evidence type="ECO:0000305" key="8"/>
<evidence type="ECO:0000312" key="9">
    <source>
        <dbReference type="Araport" id="AT1G32970"/>
    </source>
</evidence>
<evidence type="ECO:0000312" key="10">
    <source>
        <dbReference type="EMBL" id="AAF31279.1"/>
    </source>
</evidence>
<feature type="signal peptide" evidence="3">
    <location>
        <begin position="1"/>
        <end position="19"/>
    </location>
</feature>
<feature type="propeptide" id="PRO_0000435191" description="Activation peptide" evidence="1">
    <location>
        <begin position="20"/>
        <end position="88"/>
    </location>
</feature>
<feature type="chain" id="PRO_5004329302" description="Subtilisin-like protease SBT3.2" evidence="3">
    <location>
        <begin position="89"/>
        <end status="unknown"/>
    </location>
</feature>
<feature type="propeptide" id="PRO_0000435192" evidence="1">
    <location>
        <begin status="unknown"/>
        <end position="734"/>
    </location>
</feature>
<feature type="domain" description="Peptidase S8" evidence="5">
    <location>
        <begin position="92"/>
        <end position="581"/>
    </location>
</feature>
<feature type="domain" description="PA" evidence="3">
    <location>
        <begin position="361"/>
        <end position="438"/>
    </location>
</feature>
<feature type="active site" description="Charge relay system" evidence="5">
    <location>
        <position position="122"/>
    </location>
</feature>
<feature type="active site" description="Charge relay system" evidence="5">
    <location>
        <position position="179"/>
    </location>
</feature>
<feature type="active site" description="Charge relay system" evidence="5">
    <location>
        <position position="512"/>
    </location>
</feature>
<feature type="glycosylation site" description="N-linked (GlcNAc...) asparagine" evidence="4">
    <location>
        <position position="108"/>
    </location>
</feature>
<feature type="glycosylation site" description="N-linked (GlcNAc...) asparagine" evidence="4">
    <location>
        <position position="143"/>
    </location>
</feature>
<feature type="glycosylation site" description="N-linked (GlcNAc...) asparagine" evidence="4">
    <location>
        <position position="326"/>
    </location>
</feature>
<feature type="glycosylation site" description="N-linked (GlcNAc...) asparagine" evidence="4">
    <location>
        <position position="355"/>
    </location>
</feature>
<feature type="glycosylation site" description="N-linked (GlcNAc...) asparagine" evidence="4">
    <location>
        <position position="497"/>
    </location>
</feature>
<feature type="glycosylation site" description="N-linked (GlcNAc...) asparagine" evidence="4">
    <location>
        <position position="669"/>
    </location>
</feature>
<feature type="splice variant" id="VSP_058025" description="In isoform 2.">
    <location>
        <begin position="1"/>
        <end position="215"/>
    </location>
</feature>
<feature type="splice variant" id="VSP_058026" description="In isoform 2.">
    <original>SPVAKIQPTRT</original>
    <variation>YITVIHIFIYL</variation>
    <location>
        <begin position="443"/>
        <end position="453"/>
    </location>
</feature>
<feature type="splice variant" id="VSP_058027" description="In isoform 2.">
    <location>
        <begin position="454"/>
        <end position="734"/>
    </location>
</feature>